<protein>
    <recommendedName>
        <fullName>Conidiation-specific protein 6</fullName>
    </recommendedName>
</protein>
<organism>
    <name type="scientific">Neurospora crassa (strain ATCC 24698 / 74-OR23-1A / CBS 708.71 / DSM 1257 / FGSC 987)</name>
    <dbReference type="NCBI Taxonomy" id="367110"/>
    <lineage>
        <taxon>Eukaryota</taxon>
        <taxon>Fungi</taxon>
        <taxon>Dikarya</taxon>
        <taxon>Ascomycota</taxon>
        <taxon>Pezizomycotina</taxon>
        <taxon>Sordariomycetes</taxon>
        <taxon>Sordariomycetidae</taxon>
        <taxon>Sordariales</taxon>
        <taxon>Sordariaceae</taxon>
        <taxon>Neurospora</taxon>
    </lineage>
</organism>
<proteinExistence type="evidence at transcript level"/>
<feature type="chain" id="PRO_0000090020" description="Conidiation-specific protein 6">
    <location>
        <begin position="1"/>
        <end position="93"/>
    </location>
</feature>
<feature type="repeat" description="1">
    <location>
        <begin position="7"/>
        <end position="37"/>
    </location>
</feature>
<feature type="repeat" description="2">
    <location>
        <begin position="59"/>
        <end position="89"/>
    </location>
</feature>
<feature type="region of interest" description="Disordered" evidence="1">
    <location>
        <begin position="1"/>
        <end position="93"/>
    </location>
</feature>
<feature type="region of interest" description="2 X 30 AA approximate repeats">
    <location>
        <begin position="7"/>
        <end position="89"/>
    </location>
</feature>
<feature type="compositionally biased region" description="Basic and acidic residues" evidence="1">
    <location>
        <begin position="27"/>
        <end position="37"/>
    </location>
</feature>
<feature type="compositionally biased region" description="Basic and acidic residues" evidence="1">
    <location>
        <begin position="77"/>
        <end position="93"/>
    </location>
</feature>
<name>CON6_NEUCR</name>
<comment type="function">
    <text>May protect dormant spores from desiccation and play a significant role in the formation or survival of microconidia and ascospores.</text>
</comment>
<comment type="developmental stage">
    <text>Within 2 hours following conidial germination its level decreases rapidly and by 16 hours it is undetectable. Accumulates during the late stages of conidiation and is present in free conidia.</text>
</comment>
<comment type="similarity">
    <text evidence="2">Belongs to the UPF0654 (con-6) family.</text>
</comment>
<reference key="1">
    <citation type="journal article" date="1993" name="Dev. Biol.">
        <title>Structural characterization and expression analysis of the Neurospora conidiation gene con-6.</title>
        <authorList>
            <person name="White B.T."/>
            <person name="Yanofsky C."/>
        </authorList>
    </citation>
    <scope>NUCLEOTIDE SEQUENCE [GENOMIC DNA]</scope>
    <source>
        <strain>ATCC 24698 / 74-OR23-1A / CBS 708.71 / DSM 1257 / FGSC 987</strain>
        <tissue>Conidium</tissue>
    </source>
</reference>
<reference key="2">
    <citation type="journal article" date="2003" name="Nucleic Acids Res.">
        <title>What's in the genome of a filamentous fungus? Analysis of the Neurospora genome sequence.</title>
        <authorList>
            <person name="Mannhaupt G."/>
            <person name="Montrone C."/>
            <person name="Haase D."/>
            <person name="Mewes H.-W."/>
            <person name="Aign V."/>
            <person name="Hoheisel J.D."/>
            <person name="Fartmann B."/>
            <person name="Nyakatura G."/>
            <person name="Kempken F."/>
            <person name="Maier J."/>
            <person name="Schulte U."/>
        </authorList>
    </citation>
    <scope>NUCLEOTIDE SEQUENCE [LARGE SCALE GENOMIC DNA]</scope>
    <source>
        <strain>ATCC 24698 / 74-OR23-1A / CBS 708.71 / DSM 1257 / FGSC 987</strain>
    </source>
</reference>
<reference key="3">
    <citation type="journal article" date="2003" name="Nature">
        <title>The genome sequence of the filamentous fungus Neurospora crassa.</title>
        <authorList>
            <person name="Galagan J.E."/>
            <person name="Calvo S.E."/>
            <person name="Borkovich K.A."/>
            <person name="Selker E.U."/>
            <person name="Read N.D."/>
            <person name="Jaffe D.B."/>
            <person name="FitzHugh W."/>
            <person name="Ma L.-J."/>
            <person name="Smirnov S."/>
            <person name="Purcell S."/>
            <person name="Rehman B."/>
            <person name="Elkins T."/>
            <person name="Engels R."/>
            <person name="Wang S."/>
            <person name="Nielsen C.B."/>
            <person name="Butler J."/>
            <person name="Endrizzi M."/>
            <person name="Qui D."/>
            <person name="Ianakiev P."/>
            <person name="Bell-Pedersen D."/>
            <person name="Nelson M.A."/>
            <person name="Werner-Washburne M."/>
            <person name="Selitrennikoff C.P."/>
            <person name="Kinsey J.A."/>
            <person name="Braun E.L."/>
            <person name="Zelter A."/>
            <person name="Schulte U."/>
            <person name="Kothe G.O."/>
            <person name="Jedd G."/>
            <person name="Mewes H.-W."/>
            <person name="Staben C."/>
            <person name="Marcotte E."/>
            <person name="Greenberg D."/>
            <person name="Roy A."/>
            <person name="Foley K."/>
            <person name="Naylor J."/>
            <person name="Stange-Thomann N."/>
            <person name="Barrett R."/>
            <person name="Gnerre S."/>
            <person name="Kamal M."/>
            <person name="Kamvysselis M."/>
            <person name="Mauceli E.W."/>
            <person name="Bielke C."/>
            <person name="Rudd S."/>
            <person name="Frishman D."/>
            <person name="Krystofova S."/>
            <person name="Rasmussen C."/>
            <person name="Metzenberg R.L."/>
            <person name="Perkins D.D."/>
            <person name="Kroken S."/>
            <person name="Cogoni C."/>
            <person name="Macino G."/>
            <person name="Catcheside D.E.A."/>
            <person name="Li W."/>
            <person name="Pratt R.J."/>
            <person name="Osmani S.A."/>
            <person name="DeSouza C.P.C."/>
            <person name="Glass N.L."/>
            <person name="Orbach M.J."/>
            <person name="Berglund J.A."/>
            <person name="Voelker R."/>
            <person name="Yarden O."/>
            <person name="Plamann M."/>
            <person name="Seiler S."/>
            <person name="Dunlap J.C."/>
            <person name="Radford A."/>
            <person name="Aramayo R."/>
            <person name="Natvig D.O."/>
            <person name="Alex L.A."/>
            <person name="Mannhaupt G."/>
            <person name="Ebbole D.J."/>
            <person name="Freitag M."/>
            <person name="Paulsen I."/>
            <person name="Sachs M.S."/>
            <person name="Lander E.S."/>
            <person name="Nusbaum C."/>
            <person name="Birren B.W."/>
        </authorList>
    </citation>
    <scope>NUCLEOTIDE SEQUENCE [LARGE SCALE GENOMIC DNA]</scope>
    <source>
        <strain>ATCC 24698 / 74-OR23-1A / CBS 708.71 / DSM 1257 / FGSC 987</strain>
    </source>
</reference>
<keyword id="KW-0183">Conidiation</keyword>
<keyword id="KW-0221">Differentiation</keyword>
<keyword id="KW-1185">Reference proteome</keyword>
<keyword id="KW-0677">Repeat</keyword>
<keyword id="KW-0749">Sporulation</keyword>
<sequence>MSDFENKNPNNVLGGHKATLHNPNVSEEAKEHSKKVLENAGEAYDESSSGKTTTDDGDKNPGNVAGGYKATLNNPKVSDEAKEHAKKKLDGLE</sequence>
<gene>
    <name type="primary">con-6</name>
    <name type="ORF">B2G14.110</name>
    <name type="ORF">NCU08769</name>
</gene>
<dbReference type="EMBL" id="L26036">
    <property type="protein sequence ID" value="AAA33573.1"/>
    <property type="molecule type" value="Genomic_DNA"/>
</dbReference>
<dbReference type="EMBL" id="BX284753">
    <property type="protein sequence ID" value="CAD70456.1"/>
    <property type="molecule type" value="Genomic_DNA"/>
</dbReference>
<dbReference type="EMBL" id="CM002238">
    <property type="protein sequence ID" value="EAA26854.3"/>
    <property type="molecule type" value="Genomic_DNA"/>
</dbReference>
<dbReference type="PIR" id="T47252">
    <property type="entry name" value="T47252"/>
</dbReference>
<dbReference type="RefSeq" id="XP_956090.3">
    <property type="nucleotide sequence ID" value="XM_950997.3"/>
</dbReference>
<dbReference type="SMR" id="P34762"/>
<dbReference type="STRING" id="367110.P34762"/>
<dbReference type="EnsemblFungi" id="EAA26854">
    <property type="protein sequence ID" value="EAA26854"/>
    <property type="gene ID" value="NCU08769"/>
</dbReference>
<dbReference type="GeneID" id="3872237"/>
<dbReference type="KEGG" id="ncr:NCU08769"/>
<dbReference type="VEuPathDB" id="FungiDB:NCU08769"/>
<dbReference type="HOGENOM" id="CLU_2320985_0_0_1"/>
<dbReference type="InParanoid" id="P34762"/>
<dbReference type="OrthoDB" id="5419162at2759"/>
<dbReference type="Proteomes" id="UP000001805">
    <property type="component" value="Chromosome 3, Linkage Group III"/>
</dbReference>
<dbReference type="GO" id="GO:0005737">
    <property type="term" value="C:cytoplasm"/>
    <property type="evidence" value="ECO:0000318"/>
    <property type="project" value="GO_Central"/>
</dbReference>
<dbReference type="GO" id="GO:0048315">
    <property type="term" value="P:conidium formation"/>
    <property type="evidence" value="ECO:0007669"/>
    <property type="project" value="UniProtKB-KW"/>
</dbReference>
<dbReference type="GO" id="GO:0030435">
    <property type="term" value="P:sporulation resulting in formation of a cellular spore"/>
    <property type="evidence" value="ECO:0007669"/>
    <property type="project" value="UniProtKB-KW"/>
</dbReference>
<dbReference type="InterPro" id="IPR018824">
    <property type="entry name" value="Conidiation-specific_6"/>
</dbReference>
<dbReference type="InterPro" id="IPR052670">
    <property type="entry name" value="UPF0654_domain"/>
</dbReference>
<dbReference type="PANTHER" id="PTHR36576">
    <property type="entry name" value="UPF0654 PROTEIN C11D3.01C-RELATED"/>
    <property type="match status" value="1"/>
</dbReference>
<dbReference type="PANTHER" id="PTHR36576:SF1">
    <property type="entry name" value="UPF0654 PROTEIN C11D3.01C-RELATED"/>
    <property type="match status" value="1"/>
</dbReference>
<dbReference type="Pfam" id="PF10346">
    <property type="entry name" value="Con-6"/>
    <property type="match status" value="2"/>
</dbReference>
<accession>P34762</accession>
<accession>Q7RV49</accession>
<evidence type="ECO:0000256" key="1">
    <source>
        <dbReference type="SAM" id="MobiDB-lite"/>
    </source>
</evidence>
<evidence type="ECO:0000305" key="2"/>